<sequence length="553" mass="62381">MNIIDQVKQTLVEEIAASINKAGLADEIPDIKIEVPKDTKNGDYATNIAMVLTKIAKRNPREIAQAIVDNLDTEKAHVKQIDIAGPGFINFYLDNQYLTAIIPEAIEKGDQFGHVNESKGQNVLLEYVSANPTGDLHIGHARNAAVGDALANILTAAGYNVTREYYINDAGNQITNLARSIETRFFEALGDNSYSMPEDGYNGKDIIEIGKDLAEKHPEIKDYSEEARLKEFRKLGVEYEMAKLKNDLAEFNTHFDNWFSETSLYEKGEILEVLAKMKELGYTYEADGATWLRTTDFKDDKDRVLIKNDGTYTYFLPDIAYHFDKVKRGNDILIDLFGADHHGYINRLKASLETFGVDSNRLEIQIMQMVRLMENGKEVKMSKRTGNAITLREIMDEVGVDAARYFLTMRSPDSHFDFDMELAKEQSQDNPVYYAQYAHARICSILKQAKEQGIEVTAANDFTTITNEKAIELLKKVADFEPTIESAAEHRSAHRITNYIQDLASHFHKFYNAEKVLTDDIEKTKAHVAMIEAVRITLKNALAMVGVSAPESM</sequence>
<name>SYR_STAAC</name>
<dbReference type="EC" id="6.1.1.19" evidence="1"/>
<dbReference type="EMBL" id="CP000046">
    <property type="protein sequence ID" value="AAW36353.1"/>
    <property type="molecule type" value="Genomic_DNA"/>
</dbReference>
<dbReference type="RefSeq" id="WP_001021145.1">
    <property type="nucleotide sequence ID" value="NZ_JBGOFO010000005.1"/>
</dbReference>
<dbReference type="SMR" id="Q5HI60"/>
<dbReference type="KEGG" id="sac:SACOL0663"/>
<dbReference type="HOGENOM" id="CLU_006406_0_1_9"/>
<dbReference type="Proteomes" id="UP000000530">
    <property type="component" value="Chromosome"/>
</dbReference>
<dbReference type="GO" id="GO:0005737">
    <property type="term" value="C:cytoplasm"/>
    <property type="evidence" value="ECO:0007669"/>
    <property type="project" value="UniProtKB-SubCell"/>
</dbReference>
<dbReference type="GO" id="GO:0004814">
    <property type="term" value="F:arginine-tRNA ligase activity"/>
    <property type="evidence" value="ECO:0007669"/>
    <property type="project" value="UniProtKB-UniRule"/>
</dbReference>
<dbReference type="GO" id="GO:0005524">
    <property type="term" value="F:ATP binding"/>
    <property type="evidence" value="ECO:0007669"/>
    <property type="project" value="UniProtKB-UniRule"/>
</dbReference>
<dbReference type="GO" id="GO:0006420">
    <property type="term" value="P:arginyl-tRNA aminoacylation"/>
    <property type="evidence" value="ECO:0007669"/>
    <property type="project" value="UniProtKB-UniRule"/>
</dbReference>
<dbReference type="CDD" id="cd00671">
    <property type="entry name" value="ArgRS_core"/>
    <property type="match status" value="1"/>
</dbReference>
<dbReference type="FunFam" id="1.10.730.10:FF:000008">
    <property type="entry name" value="Arginine--tRNA ligase"/>
    <property type="match status" value="1"/>
</dbReference>
<dbReference type="FunFam" id="3.30.1360.70:FF:000003">
    <property type="entry name" value="Arginine--tRNA ligase"/>
    <property type="match status" value="1"/>
</dbReference>
<dbReference type="FunFam" id="3.40.50.620:FF:000062">
    <property type="entry name" value="Arginine--tRNA ligase"/>
    <property type="match status" value="1"/>
</dbReference>
<dbReference type="Gene3D" id="3.30.1360.70">
    <property type="entry name" value="Arginyl tRNA synthetase N-terminal domain"/>
    <property type="match status" value="1"/>
</dbReference>
<dbReference type="Gene3D" id="3.40.50.620">
    <property type="entry name" value="HUPs"/>
    <property type="match status" value="1"/>
</dbReference>
<dbReference type="Gene3D" id="1.10.730.10">
    <property type="entry name" value="Isoleucyl-tRNA Synthetase, Domain 1"/>
    <property type="match status" value="1"/>
</dbReference>
<dbReference type="HAMAP" id="MF_00123">
    <property type="entry name" value="Arg_tRNA_synth"/>
    <property type="match status" value="1"/>
</dbReference>
<dbReference type="InterPro" id="IPR001412">
    <property type="entry name" value="aa-tRNA-synth_I_CS"/>
</dbReference>
<dbReference type="InterPro" id="IPR001278">
    <property type="entry name" value="Arg-tRNA-ligase"/>
</dbReference>
<dbReference type="InterPro" id="IPR005148">
    <property type="entry name" value="Arg-tRNA-synth_N"/>
</dbReference>
<dbReference type="InterPro" id="IPR036695">
    <property type="entry name" value="Arg-tRNA-synth_N_sf"/>
</dbReference>
<dbReference type="InterPro" id="IPR035684">
    <property type="entry name" value="ArgRS_core"/>
</dbReference>
<dbReference type="InterPro" id="IPR008909">
    <property type="entry name" value="DALR_anticod-bd"/>
</dbReference>
<dbReference type="InterPro" id="IPR014729">
    <property type="entry name" value="Rossmann-like_a/b/a_fold"/>
</dbReference>
<dbReference type="InterPro" id="IPR009080">
    <property type="entry name" value="tRNAsynth_Ia_anticodon-bd"/>
</dbReference>
<dbReference type="NCBIfam" id="TIGR00456">
    <property type="entry name" value="argS"/>
    <property type="match status" value="1"/>
</dbReference>
<dbReference type="PANTHER" id="PTHR11956:SF5">
    <property type="entry name" value="ARGININE--TRNA LIGASE, CYTOPLASMIC"/>
    <property type="match status" value="1"/>
</dbReference>
<dbReference type="PANTHER" id="PTHR11956">
    <property type="entry name" value="ARGINYL-TRNA SYNTHETASE"/>
    <property type="match status" value="1"/>
</dbReference>
<dbReference type="Pfam" id="PF03485">
    <property type="entry name" value="Arg_tRNA_synt_N"/>
    <property type="match status" value="1"/>
</dbReference>
<dbReference type="Pfam" id="PF05746">
    <property type="entry name" value="DALR_1"/>
    <property type="match status" value="1"/>
</dbReference>
<dbReference type="Pfam" id="PF00750">
    <property type="entry name" value="tRNA-synt_1d"/>
    <property type="match status" value="1"/>
</dbReference>
<dbReference type="PRINTS" id="PR01038">
    <property type="entry name" value="TRNASYNTHARG"/>
</dbReference>
<dbReference type="SMART" id="SM01016">
    <property type="entry name" value="Arg_tRNA_synt_N"/>
    <property type="match status" value="1"/>
</dbReference>
<dbReference type="SMART" id="SM00836">
    <property type="entry name" value="DALR_1"/>
    <property type="match status" value="1"/>
</dbReference>
<dbReference type="SUPFAM" id="SSF47323">
    <property type="entry name" value="Anticodon-binding domain of a subclass of class I aminoacyl-tRNA synthetases"/>
    <property type="match status" value="1"/>
</dbReference>
<dbReference type="SUPFAM" id="SSF55190">
    <property type="entry name" value="Arginyl-tRNA synthetase (ArgRS), N-terminal 'additional' domain"/>
    <property type="match status" value="1"/>
</dbReference>
<dbReference type="SUPFAM" id="SSF52374">
    <property type="entry name" value="Nucleotidylyl transferase"/>
    <property type="match status" value="1"/>
</dbReference>
<dbReference type="PROSITE" id="PS00178">
    <property type="entry name" value="AA_TRNA_LIGASE_I"/>
    <property type="match status" value="1"/>
</dbReference>
<accession>Q5HI60</accession>
<feature type="chain" id="PRO_0000151605" description="Arginine--tRNA ligase">
    <location>
        <begin position="1"/>
        <end position="553"/>
    </location>
</feature>
<feature type="short sequence motif" description="'HIGH' region">
    <location>
        <begin position="130"/>
        <end position="140"/>
    </location>
</feature>
<protein>
    <recommendedName>
        <fullName evidence="1">Arginine--tRNA ligase</fullName>
        <ecNumber evidence="1">6.1.1.19</ecNumber>
    </recommendedName>
    <alternativeName>
        <fullName evidence="1">Arginyl-tRNA synthetase</fullName>
        <shortName evidence="1">ArgRS</shortName>
    </alternativeName>
</protein>
<evidence type="ECO:0000255" key="1">
    <source>
        <dbReference type="HAMAP-Rule" id="MF_00123"/>
    </source>
</evidence>
<keyword id="KW-0030">Aminoacyl-tRNA synthetase</keyword>
<keyword id="KW-0067">ATP-binding</keyword>
<keyword id="KW-0963">Cytoplasm</keyword>
<keyword id="KW-0436">Ligase</keyword>
<keyword id="KW-0547">Nucleotide-binding</keyword>
<keyword id="KW-0648">Protein biosynthesis</keyword>
<gene>
    <name evidence="1" type="primary">argS</name>
    <name type="ordered locus">SACOL0663</name>
</gene>
<proteinExistence type="inferred from homology"/>
<organism>
    <name type="scientific">Staphylococcus aureus (strain COL)</name>
    <dbReference type="NCBI Taxonomy" id="93062"/>
    <lineage>
        <taxon>Bacteria</taxon>
        <taxon>Bacillati</taxon>
        <taxon>Bacillota</taxon>
        <taxon>Bacilli</taxon>
        <taxon>Bacillales</taxon>
        <taxon>Staphylococcaceae</taxon>
        <taxon>Staphylococcus</taxon>
    </lineage>
</organism>
<comment type="catalytic activity">
    <reaction evidence="1">
        <text>tRNA(Arg) + L-arginine + ATP = L-arginyl-tRNA(Arg) + AMP + diphosphate</text>
        <dbReference type="Rhea" id="RHEA:20301"/>
        <dbReference type="Rhea" id="RHEA-COMP:9658"/>
        <dbReference type="Rhea" id="RHEA-COMP:9673"/>
        <dbReference type="ChEBI" id="CHEBI:30616"/>
        <dbReference type="ChEBI" id="CHEBI:32682"/>
        <dbReference type="ChEBI" id="CHEBI:33019"/>
        <dbReference type="ChEBI" id="CHEBI:78442"/>
        <dbReference type="ChEBI" id="CHEBI:78513"/>
        <dbReference type="ChEBI" id="CHEBI:456215"/>
        <dbReference type="EC" id="6.1.1.19"/>
    </reaction>
</comment>
<comment type="subunit">
    <text evidence="1">Monomer.</text>
</comment>
<comment type="subcellular location">
    <subcellularLocation>
        <location evidence="1">Cytoplasm</location>
    </subcellularLocation>
</comment>
<comment type="similarity">
    <text evidence="1">Belongs to the class-I aminoacyl-tRNA synthetase family.</text>
</comment>
<reference key="1">
    <citation type="journal article" date="2005" name="J. Bacteriol.">
        <title>Insights on evolution of virulence and resistance from the complete genome analysis of an early methicillin-resistant Staphylococcus aureus strain and a biofilm-producing methicillin-resistant Staphylococcus epidermidis strain.</title>
        <authorList>
            <person name="Gill S.R."/>
            <person name="Fouts D.E."/>
            <person name="Archer G.L."/>
            <person name="Mongodin E.F."/>
            <person name="DeBoy R.T."/>
            <person name="Ravel J."/>
            <person name="Paulsen I.T."/>
            <person name="Kolonay J.F."/>
            <person name="Brinkac L.M."/>
            <person name="Beanan M.J."/>
            <person name="Dodson R.J."/>
            <person name="Daugherty S.C."/>
            <person name="Madupu R."/>
            <person name="Angiuoli S.V."/>
            <person name="Durkin A.S."/>
            <person name="Haft D.H."/>
            <person name="Vamathevan J.J."/>
            <person name="Khouri H."/>
            <person name="Utterback T.R."/>
            <person name="Lee C."/>
            <person name="Dimitrov G."/>
            <person name="Jiang L."/>
            <person name="Qin H."/>
            <person name="Weidman J."/>
            <person name="Tran K."/>
            <person name="Kang K.H."/>
            <person name="Hance I.R."/>
            <person name="Nelson K.E."/>
            <person name="Fraser C.M."/>
        </authorList>
    </citation>
    <scope>NUCLEOTIDE SEQUENCE [LARGE SCALE GENOMIC DNA]</scope>
    <source>
        <strain>COL</strain>
    </source>
</reference>